<accession>Q7ULX4</accession>
<protein>
    <recommendedName>
        <fullName evidence="1">NAD(P)H-hydrate epimerase</fullName>
        <ecNumber evidence="1">5.1.99.6</ecNumber>
    </recommendedName>
    <alternativeName>
        <fullName evidence="1">NAD(P)HX epimerase</fullName>
    </alternativeName>
</protein>
<sequence>MSPEVLSARPGFVRNLMDVMMKPVLQLPPMTCQRIREIDSLAMEQFQMPGIILMENAGRGAAELIEELAPEGNVLILCGKGNNGGDGFTIARHLQLAGREVMILAMAATNELQGDAAIQAKIAEAAGIKIQVVGEAVEAGRLPATDIVVDGLLGTGAKPPLRGRYAEVVEAANASSAIRIALDIPTGMNGDTGETGETTFRADHTLTFAAPKVGFEKLGAARFTGEVHVISIGVPLELLRQFSV</sequence>
<name>NNRE_RHOBA</name>
<dbReference type="EC" id="5.1.99.6" evidence="1"/>
<dbReference type="EMBL" id="BX294149">
    <property type="protein sequence ID" value="CAD76143.1"/>
    <property type="molecule type" value="Genomic_DNA"/>
</dbReference>
<dbReference type="RefSeq" id="NP_868766.1">
    <property type="nucleotide sequence ID" value="NC_005027.1"/>
</dbReference>
<dbReference type="RefSeq" id="WP_011122200.1">
    <property type="nucleotide sequence ID" value="NC_005027.1"/>
</dbReference>
<dbReference type="SMR" id="Q7ULX4"/>
<dbReference type="STRING" id="243090.RB9218"/>
<dbReference type="EnsemblBacteria" id="CAD76143">
    <property type="protein sequence ID" value="CAD76143"/>
    <property type="gene ID" value="RB9218"/>
</dbReference>
<dbReference type="KEGG" id="rba:RB9218"/>
<dbReference type="PATRIC" id="fig|243090.15.peg.4415"/>
<dbReference type="eggNOG" id="COG0062">
    <property type="taxonomic scope" value="Bacteria"/>
</dbReference>
<dbReference type="HOGENOM" id="CLU_024853_0_1_0"/>
<dbReference type="InParanoid" id="Q7ULX4"/>
<dbReference type="OrthoDB" id="9806925at2"/>
<dbReference type="Proteomes" id="UP000001025">
    <property type="component" value="Chromosome"/>
</dbReference>
<dbReference type="GO" id="GO:0046872">
    <property type="term" value="F:metal ion binding"/>
    <property type="evidence" value="ECO:0007669"/>
    <property type="project" value="UniProtKB-KW"/>
</dbReference>
<dbReference type="GO" id="GO:0052856">
    <property type="term" value="F:NAD(P)HX epimerase activity"/>
    <property type="evidence" value="ECO:0000318"/>
    <property type="project" value="GO_Central"/>
</dbReference>
<dbReference type="GO" id="GO:0000166">
    <property type="term" value="F:nucleotide binding"/>
    <property type="evidence" value="ECO:0007669"/>
    <property type="project" value="UniProtKB-KW"/>
</dbReference>
<dbReference type="Gene3D" id="3.40.50.10260">
    <property type="entry name" value="YjeF N-terminal domain"/>
    <property type="match status" value="1"/>
</dbReference>
<dbReference type="HAMAP" id="MF_01966">
    <property type="entry name" value="NADHX_epimerase"/>
    <property type="match status" value="1"/>
</dbReference>
<dbReference type="InterPro" id="IPR004443">
    <property type="entry name" value="YjeF_N_dom"/>
</dbReference>
<dbReference type="InterPro" id="IPR036652">
    <property type="entry name" value="YjeF_N_dom_sf"/>
</dbReference>
<dbReference type="InterPro" id="IPR032976">
    <property type="entry name" value="YJEFN_prot_NAXE-like"/>
</dbReference>
<dbReference type="NCBIfam" id="TIGR00197">
    <property type="entry name" value="yjeF_nterm"/>
    <property type="match status" value="1"/>
</dbReference>
<dbReference type="PANTHER" id="PTHR13232">
    <property type="entry name" value="NAD(P)H-HYDRATE EPIMERASE"/>
    <property type="match status" value="1"/>
</dbReference>
<dbReference type="PANTHER" id="PTHR13232:SF10">
    <property type="entry name" value="NAD(P)H-HYDRATE EPIMERASE"/>
    <property type="match status" value="1"/>
</dbReference>
<dbReference type="Pfam" id="PF03853">
    <property type="entry name" value="YjeF_N"/>
    <property type="match status" value="1"/>
</dbReference>
<dbReference type="SUPFAM" id="SSF64153">
    <property type="entry name" value="YjeF N-terminal domain-like"/>
    <property type="match status" value="1"/>
</dbReference>
<dbReference type="PROSITE" id="PS51385">
    <property type="entry name" value="YJEF_N"/>
    <property type="match status" value="1"/>
</dbReference>
<evidence type="ECO:0000255" key="1">
    <source>
        <dbReference type="HAMAP-Rule" id="MF_01966"/>
    </source>
</evidence>
<keyword id="KW-0413">Isomerase</keyword>
<keyword id="KW-0479">Metal-binding</keyword>
<keyword id="KW-0520">NAD</keyword>
<keyword id="KW-0521">NADP</keyword>
<keyword id="KW-0547">Nucleotide-binding</keyword>
<keyword id="KW-0630">Potassium</keyword>
<keyword id="KW-1185">Reference proteome</keyword>
<gene>
    <name evidence="1" type="primary">nnrE</name>
    <name type="ordered locus">RB9218</name>
</gene>
<organism>
    <name type="scientific">Rhodopirellula baltica (strain DSM 10527 / NCIMB 13988 / SH1)</name>
    <dbReference type="NCBI Taxonomy" id="243090"/>
    <lineage>
        <taxon>Bacteria</taxon>
        <taxon>Pseudomonadati</taxon>
        <taxon>Planctomycetota</taxon>
        <taxon>Planctomycetia</taxon>
        <taxon>Pirellulales</taxon>
        <taxon>Pirellulaceae</taxon>
        <taxon>Rhodopirellula</taxon>
    </lineage>
</organism>
<proteinExistence type="inferred from homology"/>
<comment type="function">
    <text evidence="1">Catalyzes the epimerization of the S- and R-forms of NAD(P)HX, a damaged form of NAD(P)H that is a result of enzymatic or heat-dependent hydration. This is a prerequisite for the S-specific NAD(P)H-hydrate dehydratase to allow the repair of both epimers of NAD(P)HX.</text>
</comment>
<comment type="catalytic activity">
    <reaction evidence="1">
        <text>(6R)-NADHX = (6S)-NADHX</text>
        <dbReference type="Rhea" id="RHEA:32215"/>
        <dbReference type="ChEBI" id="CHEBI:64074"/>
        <dbReference type="ChEBI" id="CHEBI:64075"/>
        <dbReference type="EC" id="5.1.99.6"/>
    </reaction>
</comment>
<comment type="catalytic activity">
    <reaction evidence="1">
        <text>(6R)-NADPHX = (6S)-NADPHX</text>
        <dbReference type="Rhea" id="RHEA:32227"/>
        <dbReference type="ChEBI" id="CHEBI:64076"/>
        <dbReference type="ChEBI" id="CHEBI:64077"/>
        <dbReference type="EC" id="5.1.99.6"/>
    </reaction>
</comment>
<comment type="cofactor">
    <cofactor evidence="1">
        <name>K(+)</name>
        <dbReference type="ChEBI" id="CHEBI:29103"/>
    </cofactor>
    <text evidence="1">Binds 1 potassium ion per subunit.</text>
</comment>
<comment type="similarity">
    <text evidence="1">Belongs to the NnrE/AIBP family.</text>
</comment>
<reference key="1">
    <citation type="journal article" date="2003" name="Proc. Natl. Acad. Sci. U.S.A.">
        <title>Complete genome sequence of the marine planctomycete Pirellula sp. strain 1.</title>
        <authorList>
            <person name="Gloeckner F.O."/>
            <person name="Kube M."/>
            <person name="Bauer M."/>
            <person name="Teeling H."/>
            <person name="Lombardot T."/>
            <person name="Ludwig W."/>
            <person name="Gade D."/>
            <person name="Beck A."/>
            <person name="Borzym K."/>
            <person name="Heitmann K."/>
            <person name="Rabus R."/>
            <person name="Schlesner H."/>
            <person name="Amann R."/>
            <person name="Reinhardt R."/>
        </authorList>
    </citation>
    <scope>NUCLEOTIDE SEQUENCE [LARGE SCALE GENOMIC DNA]</scope>
    <source>
        <strain>DSM 10527 / NCIMB 13988 / SH1</strain>
    </source>
</reference>
<feature type="chain" id="PRO_0000416377" description="NAD(P)H-hydrate epimerase">
    <location>
        <begin position="1"/>
        <end position="244"/>
    </location>
</feature>
<feature type="domain" description="YjeF N-terminal" evidence="1">
    <location>
        <begin position="35"/>
        <end position="240"/>
    </location>
</feature>
<feature type="binding site" evidence="1">
    <location>
        <begin position="82"/>
        <end position="86"/>
    </location>
    <ligand>
        <name>(6S)-NADPHX</name>
        <dbReference type="ChEBI" id="CHEBI:64076"/>
    </ligand>
</feature>
<feature type="binding site" evidence="1">
    <location>
        <position position="83"/>
    </location>
    <ligand>
        <name>K(+)</name>
        <dbReference type="ChEBI" id="CHEBI:29103"/>
    </ligand>
</feature>
<feature type="binding site" evidence="1">
    <location>
        <position position="150"/>
    </location>
    <ligand>
        <name>K(+)</name>
        <dbReference type="ChEBI" id="CHEBI:29103"/>
    </ligand>
</feature>
<feature type="binding site" evidence="1">
    <location>
        <begin position="154"/>
        <end position="160"/>
    </location>
    <ligand>
        <name>(6S)-NADPHX</name>
        <dbReference type="ChEBI" id="CHEBI:64076"/>
    </ligand>
</feature>
<feature type="binding site" evidence="1">
    <location>
        <position position="165"/>
    </location>
    <ligand>
        <name>(6S)-NADPHX</name>
        <dbReference type="ChEBI" id="CHEBI:64076"/>
    </ligand>
</feature>
<feature type="binding site" evidence="1">
    <location>
        <position position="183"/>
    </location>
    <ligand>
        <name>(6S)-NADPHX</name>
        <dbReference type="ChEBI" id="CHEBI:64076"/>
    </ligand>
</feature>
<feature type="binding site" evidence="1">
    <location>
        <position position="186"/>
    </location>
    <ligand>
        <name>K(+)</name>
        <dbReference type="ChEBI" id="CHEBI:29103"/>
    </ligand>
</feature>